<keyword id="KW-1003">Cell membrane</keyword>
<keyword id="KW-0406">Ion transport</keyword>
<keyword id="KW-0464">Manganese</keyword>
<keyword id="KW-0472">Membrane</keyword>
<keyword id="KW-1185">Reference proteome</keyword>
<keyword id="KW-0812">Transmembrane</keyword>
<keyword id="KW-1133">Transmembrane helix</keyword>
<keyword id="KW-0813">Transport</keyword>
<reference key="1">
    <citation type="submission" date="2007-03" db="EMBL/GenBank/DDBJ databases">
        <title>Complete sequence of Desulfotomaculum reducens MI-1.</title>
        <authorList>
            <consortium name="US DOE Joint Genome Institute"/>
            <person name="Copeland A."/>
            <person name="Lucas S."/>
            <person name="Lapidus A."/>
            <person name="Barry K."/>
            <person name="Detter J.C."/>
            <person name="Glavina del Rio T."/>
            <person name="Hammon N."/>
            <person name="Israni S."/>
            <person name="Dalin E."/>
            <person name="Tice H."/>
            <person name="Pitluck S."/>
            <person name="Sims D."/>
            <person name="Brettin T."/>
            <person name="Bruce D."/>
            <person name="Han C."/>
            <person name="Tapia R."/>
            <person name="Schmutz J."/>
            <person name="Larimer F."/>
            <person name="Land M."/>
            <person name="Hauser L."/>
            <person name="Kyrpides N."/>
            <person name="Kim E."/>
            <person name="Tebo B.M."/>
            <person name="Richardson P."/>
        </authorList>
    </citation>
    <scope>NUCLEOTIDE SEQUENCE [LARGE SCALE GENOMIC DNA]</scope>
    <source>
        <strain>ATCC BAA-1160 / DSM 100696 / MI-1</strain>
    </source>
</reference>
<sequence>MSLFTLFALAVALGTDAFSLCIGIGIAGVNRRQIALISLTVLIFHILMPLLGWYAGGFLGSKMGQAASIAGALLLLYLGGKMIWDTIKPGKDEGPRFVITNTGGLLLLSASVSMDALSVGFTLGTQQVSLVLAAGVIGLVAGMMTFAGLTLGKYVGDWIGERAELVGGIILVGIGVKLFF</sequence>
<dbReference type="EMBL" id="CP000612">
    <property type="protein sequence ID" value="ABO51667.1"/>
    <property type="molecule type" value="Genomic_DNA"/>
</dbReference>
<dbReference type="RefSeq" id="WP_011879455.1">
    <property type="nucleotide sequence ID" value="NC_009253.1"/>
</dbReference>
<dbReference type="STRING" id="349161.Dred_3165"/>
<dbReference type="KEGG" id="drm:Dred_3165"/>
<dbReference type="eggNOG" id="COG1971">
    <property type="taxonomic scope" value="Bacteria"/>
</dbReference>
<dbReference type="HOGENOM" id="CLU_096410_1_1_9"/>
<dbReference type="OrthoDB" id="1679700at2"/>
<dbReference type="Proteomes" id="UP000001556">
    <property type="component" value="Chromosome"/>
</dbReference>
<dbReference type="GO" id="GO:0005886">
    <property type="term" value="C:plasma membrane"/>
    <property type="evidence" value="ECO:0007669"/>
    <property type="project" value="UniProtKB-SubCell"/>
</dbReference>
<dbReference type="GO" id="GO:0005384">
    <property type="term" value="F:manganese ion transmembrane transporter activity"/>
    <property type="evidence" value="ECO:0007669"/>
    <property type="project" value="UniProtKB-UniRule"/>
</dbReference>
<dbReference type="HAMAP" id="MF_01521">
    <property type="entry name" value="MntP_pump"/>
    <property type="match status" value="1"/>
</dbReference>
<dbReference type="InterPro" id="IPR003810">
    <property type="entry name" value="Mntp/YtaF"/>
</dbReference>
<dbReference type="InterPro" id="IPR022929">
    <property type="entry name" value="Put_MntP"/>
</dbReference>
<dbReference type="PANTHER" id="PTHR35529">
    <property type="entry name" value="MANGANESE EFFLUX PUMP MNTP-RELATED"/>
    <property type="match status" value="1"/>
</dbReference>
<dbReference type="PANTHER" id="PTHR35529:SF1">
    <property type="entry name" value="MANGANESE EFFLUX PUMP MNTP-RELATED"/>
    <property type="match status" value="1"/>
</dbReference>
<dbReference type="Pfam" id="PF02659">
    <property type="entry name" value="Mntp"/>
    <property type="match status" value="1"/>
</dbReference>
<gene>
    <name evidence="1" type="primary">mntP</name>
    <name type="ordered locus">Dred_3165</name>
</gene>
<feature type="chain" id="PRO_1000087551" description="Putative manganese efflux pump MntP">
    <location>
        <begin position="1"/>
        <end position="180"/>
    </location>
</feature>
<feature type="transmembrane region" description="Helical" evidence="1">
    <location>
        <begin position="6"/>
        <end position="26"/>
    </location>
</feature>
<feature type="transmembrane region" description="Helical" evidence="1">
    <location>
        <begin position="34"/>
        <end position="54"/>
    </location>
</feature>
<feature type="transmembrane region" description="Helical" evidence="1">
    <location>
        <begin position="67"/>
        <end position="87"/>
    </location>
</feature>
<feature type="transmembrane region" description="Helical" evidence="1">
    <location>
        <begin position="103"/>
        <end position="123"/>
    </location>
</feature>
<feature type="transmembrane region" description="Helical" evidence="1">
    <location>
        <begin position="130"/>
        <end position="150"/>
    </location>
</feature>
<feature type="transmembrane region" description="Helical" evidence="1">
    <location>
        <begin position="159"/>
        <end position="179"/>
    </location>
</feature>
<comment type="function">
    <text evidence="1">Probably functions as a manganese efflux pump.</text>
</comment>
<comment type="subcellular location">
    <subcellularLocation>
        <location evidence="1">Cell membrane</location>
        <topology evidence="1">Multi-pass membrane protein</topology>
    </subcellularLocation>
</comment>
<comment type="similarity">
    <text evidence="1">Belongs to the MntP (TC 9.B.29) family.</text>
</comment>
<proteinExistence type="inferred from homology"/>
<protein>
    <recommendedName>
        <fullName evidence="1">Putative manganese efflux pump MntP</fullName>
    </recommendedName>
</protein>
<name>MNTP_DESRM</name>
<evidence type="ECO:0000255" key="1">
    <source>
        <dbReference type="HAMAP-Rule" id="MF_01521"/>
    </source>
</evidence>
<organism>
    <name type="scientific">Desulforamulus reducens (strain ATCC BAA-1160 / DSM 100696 / MI-1)</name>
    <name type="common">Desulfotomaculum reducens</name>
    <dbReference type="NCBI Taxonomy" id="349161"/>
    <lineage>
        <taxon>Bacteria</taxon>
        <taxon>Bacillati</taxon>
        <taxon>Bacillota</taxon>
        <taxon>Clostridia</taxon>
        <taxon>Eubacteriales</taxon>
        <taxon>Peptococcaceae</taxon>
        <taxon>Desulforamulus</taxon>
    </lineage>
</organism>
<accession>A4J9B4</accession>